<organism>
    <name type="scientific">Prochlorococcus marinus (strain MIT 9215)</name>
    <dbReference type="NCBI Taxonomy" id="93060"/>
    <lineage>
        <taxon>Bacteria</taxon>
        <taxon>Bacillati</taxon>
        <taxon>Cyanobacteriota</taxon>
        <taxon>Cyanophyceae</taxon>
        <taxon>Synechococcales</taxon>
        <taxon>Prochlorococcaceae</taxon>
        <taxon>Prochlorococcus</taxon>
    </lineage>
</organism>
<gene>
    <name evidence="1" type="primary">argC</name>
    <name type="ordered locus">P9215_10001</name>
</gene>
<dbReference type="EC" id="1.2.1.38" evidence="1"/>
<dbReference type="EMBL" id="CP000825">
    <property type="protein sequence ID" value="ABV50615.1"/>
    <property type="molecule type" value="Genomic_DNA"/>
</dbReference>
<dbReference type="RefSeq" id="WP_012007702.1">
    <property type="nucleotide sequence ID" value="NC_009840.1"/>
</dbReference>
<dbReference type="SMR" id="A8G4T4"/>
<dbReference type="STRING" id="93060.P9215_10001"/>
<dbReference type="KEGG" id="pmh:P9215_10001"/>
<dbReference type="eggNOG" id="COG0002">
    <property type="taxonomic scope" value="Bacteria"/>
</dbReference>
<dbReference type="HOGENOM" id="CLU_006384_0_1_3"/>
<dbReference type="OrthoDB" id="9801289at2"/>
<dbReference type="UniPathway" id="UPA00068">
    <property type="reaction ID" value="UER00108"/>
</dbReference>
<dbReference type="Proteomes" id="UP000002014">
    <property type="component" value="Chromosome"/>
</dbReference>
<dbReference type="GO" id="GO:0005737">
    <property type="term" value="C:cytoplasm"/>
    <property type="evidence" value="ECO:0007669"/>
    <property type="project" value="UniProtKB-SubCell"/>
</dbReference>
<dbReference type="GO" id="GO:0003942">
    <property type="term" value="F:N-acetyl-gamma-glutamyl-phosphate reductase activity"/>
    <property type="evidence" value="ECO:0007669"/>
    <property type="project" value="UniProtKB-UniRule"/>
</dbReference>
<dbReference type="GO" id="GO:0051287">
    <property type="term" value="F:NAD binding"/>
    <property type="evidence" value="ECO:0007669"/>
    <property type="project" value="InterPro"/>
</dbReference>
<dbReference type="GO" id="GO:0070401">
    <property type="term" value="F:NADP+ binding"/>
    <property type="evidence" value="ECO:0007669"/>
    <property type="project" value="InterPro"/>
</dbReference>
<dbReference type="GO" id="GO:0006526">
    <property type="term" value="P:L-arginine biosynthetic process"/>
    <property type="evidence" value="ECO:0007669"/>
    <property type="project" value="UniProtKB-UniRule"/>
</dbReference>
<dbReference type="CDD" id="cd23934">
    <property type="entry name" value="AGPR_1_C"/>
    <property type="match status" value="1"/>
</dbReference>
<dbReference type="CDD" id="cd17895">
    <property type="entry name" value="AGPR_1_N"/>
    <property type="match status" value="1"/>
</dbReference>
<dbReference type="Gene3D" id="3.30.360.10">
    <property type="entry name" value="Dihydrodipicolinate Reductase, domain 2"/>
    <property type="match status" value="1"/>
</dbReference>
<dbReference type="Gene3D" id="3.40.50.720">
    <property type="entry name" value="NAD(P)-binding Rossmann-like Domain"/>
    <property type="match status" value="1"/>
</dbReference>
<dbReference type="HAMAP" id="MF_00150">
    <property type="entry name" value="ArgC_type1"/>
    <property type="match status" value="1"/>
</dbReference>
<dbReference type="InterPro" id="IPR023013">
    <property type="entry name" value="AGPR_AS"/>
</dbReference>
<dbReference type="InterPro" id="IPR000706">
    <property type="entry name" value="AGPR_type-1"/>
</dbReference>
<dbReference type="InterPro" id="IPR036291">
    <property type="entry name" value="NAD(P)-bd_dom_sf"/>
</dbReference>
<dbReference type="InterPro" id="IPR050085">
    <property type="entry name" value="NAGSA_dehydrogenase"/>
</dbReference>
<dbReference type="InterPro" id="IPR000534">
    <property type="entry name" value="Semialdehyde_DH_NAD-bd"/>
</dbReference>
<dbReference type="NCBIfam" id="TIGR01850">
    <property type="entry name" value="argC"/>
    <property type="match status" value="1"/>
</dbReference>
<dbReference type="PANTHER" id="PTHR32338:SF10">
    <property type="entry name" value="N-ACETYL-GAMMA-GLUTAMYL-PHOSPHATE REDUCTASE, CHLOROPLASTIC-RELATED"/>
    <property type="match status" value="1"/>
</dbReference>
<dbReference type="PANTHER" id="PTHR32338">
    <property type="entry name" value="N-ACETYL-GAMMA-GLUTAMYL-PHOSPHATE REDUCTASE, CHLOROPLASTIC-RELATED-RELATED"/>
    <property type="match status" value="1"/>
</dbReference>
<dbReference type="Pfam" id="PF01118">
    <property type="entry name" value="Semialdhyde_dh"/>
    <property type="match status" value="1"/>
</dbReference>
<dbReference type="Pfam" id="PF22698">
    <property type="entry name" value="Semialdhyde_dhC_1"/>
    <property type="match status" value="1"/>
</dbReference>
<dbReference type="SMART" id="SM00859">
    <property type="entry name" value="Semialdhyde_dh"/>
    <property type="match status" value="1"/>
</dbReference>
<dbReference type="SUPFAM" id="SSF55347">
    <property type="entry name" value="Glyceraldehyde-3-phosphate dehydrogenase-like, C-terminal domain"/>
    <property type="match status" value="1"/>
</dbReference>
<dbReference type="SUPFAM" id="SSF51735">
    <property type="entry name" value="NAD(P)-binding Rossmann-fold domains"/>
    <property type="match status" value="1"/>
</dbReference>
<dbReference type="PROSITE" id="PS01224">
    <property type="entry name" value="ARGC"/>
    <property type="match status" value="1"/>
</dbReference>
<protein>
    <recommendedName>
        <fullName evidence="1">N-acetyl-gamma-glutamyl-phosphate reductase</fullName>
        <shortName evidence="1">AGPR</shortName>
        <ecNumber evidence="1">1.2.1.38</ecNumber>
    </recommendedName>
    <alternativeName>
        <fullName evidence="1">N-acetyl-glutamate semialdehyde dehydrogenase</fullName>
        <shortName evidence="1">NAGSA dehydrogenase</shortName>
    </alternativeName>
</protein>
<sequence>MNVAIVGATGYGGIQAVNLLKKNKNYKISFLGGNKTSGSKWNDNFPFIYLDNDPYVEEISVDNISKNSDVALLCLPNGLSSTLTRKLLERGLKVIDLSADYRYKSLDEWKKVYSKEAAIYKRNDDDLCKEAVYGLPEINKEAISKGRLIACPGCYPTSALIPLAPYLSQGIIENEGIVIDSKSGTSGGGREPNQKLLLSECGEGLSAYGLINHRHTSEIEQVASLISGNKIELLFTPHLVPIPRGMHSTIYGRLRDPGLTSDDCRILLDNYYRNFKNIKVLPVDTFPSTKWVKNTNQIFLSVKVDIRNGRIIILSAIDNLLKGQTGQAIQNLNIMSGFSMDEGLELTNNYP</sequence>
<reference key="1">
    <citation type="journal article" date="2007" name="PLoS Genet.">
        <title>Patterns and implications of gene gain and loss in the evolution of Prochlorococcus.</title>
        <authorList>
            <person name="Kettler G.C."/>
            <person name="Martiny A.C."/>
            <person name="Huang K."/>
            <person name="Zucker J."/>
            <person name="Coleman M.L."/>
            <person name="Rodrigue S."/>
            <person name="Chen F."/>
            <person name="Lapidus A."/>
            <person name="Ferriera S."/>
            <person name="Johnson J."/>
            <person name="Steglich C."/>
            <person name="Church G.M."/>
            <person name="Richardson P."/>
            <person name="Chisholm S.W."/>
        </authorList>
    </citation>
    <scope>NUCLEOTIDE SEQUENCE [LARGE SCALE GENOMIC DNA]</scope>
    <source>
        <strain>MIT 9215</strain>
    </source>
</reference>
<evidence type="ECO:0000255" key="1">
    <source>
        <dbReference type="HAMAP-Rule" id="MF_00150"/>
    </source>
</evidence>
<feature type="chain" id="PRO_1000058153" description="N-acetyl-gamma-glutamyl-phosphate reductase">
    <location>
        <begin position="1"/>
        <end position="351"/>
    </location>
</feature>
<feature type="active site" evidence="1">
    <location>
        <position position="154"/>
    </location>
</feature>
<keyword id="KW-0028">Amino-acid biosynthesis</keyword>
<keyword id="KW-0055">Arginine biosynthesis</keyword>
<keyword id="KW-0963">Cytoplasm</keyword>
<keyword id="KW-0521">NADP</keyword>
<keyword id="KW-0560">Oxidoreductase</keyword>
<accession>A8G4T4</accession>
<comment type="function">
    <text evidence="1">Catalyzes the NADPH-dependent reduction of N-acetyl-5-glutamyl phosphate to yield N-acetyl-L-glutamate 5-semialdehyde.</text>
</comment>
<comment type="catalytic activity">
    <reaction evidence="1">
        <text>N-acetyl-L-glutamate 5-semialdehyde + phosphate + NADP(+) = N-acetyl-L-glutamyl 5-phosphate + NADPH + H(+)</text>
        <dbReference type="Rhea" id="RHEA:21588"/>
        <dbReference type="ChEBI" id="CHEBI:15378"/>
        <dbReference type="ChEBI" id="CHEBI:29123"/>
        <dbReference type="ChEBI" id="CHEBI:43474"/>
        <dbReference type="ChEBI" id="CHEBI:57783"/>
        <dbReference type="ChEBI" id="CHEBI:57936"/>
        <dbReference type="ChEBI" id="CHEBI:58349"/>
        <dbReference type="EC" id="1.2.1.38"/>
    </reaction>
</comment>
<comment type="pathway">
    <text evidence="1">Amino-acid biosynthesis; L-arginine biosynthesis; N(2)-acetyl-L-ornithine from L-glutamate: step 3/4.</text>
</comment>
<comment type="subcellular location">
    <subcellularLocation>
        <location evidence="1">Cytoplasm</location>
    </subcellularLocation>
</comment>
<comment type="similarity">
    <text evidence="1">Belongs to the NAGSA dehydrogenase family. Type 1 subfamily.</text>
</comment>
<proteinExistence type="inferred from homology"/>
<name>ARGC_PROM2</name>